<comment type="function">
    <text evidence="1">Displays ATPase and GTPase activities.</text>
</comment>
<comment type="similarity">
    <text evidence="1">Belongs to the RapZ-like family.</text>
</comment>
<keyword id="KW-0067">ATP-binding</keyword>
<keyword id="KW-0342">GTP-binding</keyword>
<keyword id="KW-0547">Nucleotide-binding</keyword>
<keyword id="KW-1185">Reference proteome</keyword>
<reference key="1">
    <citation type="journal article" date="2009" name="Appl. Environ. Microbiol.">
        <title>Three genomes from the phylum Acidobacteria provide insight into the lifestyles of these microorganisms in soils.</title>
        <authorList>
            <person name="Ward N.L."/>
            <person name="Challacombe J.F."/>
            <person name="Janssen P.H."/>
            <person name="Henrissat B."/>
            <person name="Coutinho P.M."/>
            <person name="Wu M."/>
            <person name="Xie G."/>
            <person name="Haft D.H."/>
            <person name="Sait M."/>
            <person name="Badger J."/>
            <person name="Barabote R.D."/>
            <person name="Bradley B."/>
            <person name="Brettin T.S."/>
            <person name="Brinkac L.M."/>
            <person name="Bruce D."/>
            <person name="Creasy T."/>
            <person name="Daugherty S.C."/>
            <person name="Davidsen T.M."/>
            <person name="DeBoy R.T."/>
            <person name="Detter J.C."/>
            <person name="Dodson R.J."/>
            <person name="Durkin A.S."/>
            <person name="Ganapathy A."/>
            <person name="Gwinn-Giglio M."/>
            <person name="Han C.S."/>
            <person name="Khouri H."/>
            <person name="Kiss H."/>
            <person name="Kothari S.P."/>
            <person name="Madupu R."/>
            <person name="Nelson K.E."/>
            <person name="Nelson W.C."/>
            <person name="Paulsen I."/>
            <person name="Penn K."/>
            <person name="Ren Q."/>
            <person name="Rosovitz M.J."/>
            <person name="Selengut J.D."/>
            <person name="Shrivastava S."/>
            <person name="Sullivan S.A."/>
            <person name="Tapia R."/>
            <person name="Thompson L.S."/>
            <person name="Watkins K.L."/>
            <person name="Yang Q."/>
            <person name="Yu C."/>
            <person name="Zafar N."/>
            <person name="Zhou L."/>
            <person name="Kuske C.R."/>
        </authorList>
    </citation>
    <scope>NUCLEOTIDE SEQUENCE [LARGE SCALE GENOMIC DNA]</scope>
    <source>
        <strain>ATCC 51196 / DSM 11244 / BCRC 80197 / JCM 7670 / NBRC 15755 / NCIMB 13165 / 161</strain>
    </source>
</reference>
<evidence type="ECO:0000255" key="1">
    <source>
        <dbReference type="HAMAP-Rule" id="MF_00636"/>
    </source>
</evidence>
<evidence type="ECO:0000256" key="2">
    <source>
        <dbReference type="SAM" id="MobiDB-lite"/>
    </source>
</evidence>
<sequence length="307" mass="34633">MPAPEPTRRAKKDASASPSPAHPASRELVILTGLSGAGKGSALKAFEDLGFYAVDNLPIELVPRFAELVAQSVEITRATLVVDVREGQSLAKFPQILQEVRQTLQTTVVFLEASQAVLLRRFSETRRPHPLGREEQVVHAIADEKQRLEPLRNVADMIVDTSRFNVHELRAYIQSKFTREGNAKSMLITCMSFGYKNGVPLDADLVFDVRFLPNPHFIPQFRPLTGKDAKVVRYIRKFEQTRTFLDKVTELLLFLLPHYVHEGKSYLTVAFGCTGGQHRSVMIAEEIAKRLGKKSYRVKAEHRDMPR</sequence>
<dbReference type="EMBL" id="CP001472">
    <property type="protein sequence ID" value="ACO31855.1"/>
    <property type="molecule type" value="Genomic_DNA"/>
</dbReference>
<dbReference type="RefSeq" id="WP_015895804.1">
    <property type="nucleotide sequence ID" value="NC_012483.1"/>
</dbReference>
<dbReference type="SMR" id="C1F1L8"/>
<dbReference type="FunCoup" id="C1F1L8">
    <property type="interactions" value="155"/>
</dbReference>
<dbReference type="STRING" id="240015.ACP_0619"/>
<dbReference type="KEGG" id="aca:ACP_0619"/>
<dbReference type="eggNOG" id="COG1660">
    <property type="taxonomic scope" value="Bacteria"/>
</dbReference>
<dbReference type="HOGENOM" id="CLU_059558_0_0_0"/>
<dbReference type="InParanoid" id="C1F1L8"/>
<dbReference type="OrthoDB" id="9784461at2"/>
<dbReference type="Proteomes" id="UP000002207">
    <property type="component" value="Chromosome"/>
</dbReference>
<dbReference type="GO" id="GO:0005524">
    <property type="term" value="F:ATP binding"/>
    <property type="evidence" value="ECO:0007669"/>
    <property type="project" value="UniProtKB-UniRule"/>
</dbReference>
<dbReference type="GO" id="GO:0005525">
    <property type="term" value="F:GTP binding"/>
    <property type="evidence" value="ECO:0007669"/>
    <property type="project" value="UniProtKB-UniRule"/>
</dbReference>
<dbReference type="Gene3D" id="3.40.50.300">
    <property type="entry name" value="P-loop containing nucleotide triphosphate hydrolases"/>
    <property type="match status" value="1"/>
</dbReference>
<dbReference type="HAMAP" id="MF_00636">
    <property type="entry name" value="RapZ_like"/>
    <property type="match status" value="1"/>
</dbReference>
<dbReference type="InterPro" id="IPR027417">
    <property type="entry name" value="P-loop_NTPase"/>
</dbReference>
<dbReference type="InterPro" id="IPR005337">
    <property type="entry name" value="RapZ-like"/>
</dbReference>
<dbReference type="InterPro" id="IPR053930">
    <property type="entry name" value="RapZ-like_N"/>
</dbReference>
<dbReference type="InterPro" id="IPR053931">
    <property type="entry name" value="RapZ_C"/>
</dbReference>
<dbReference type="NCBIfam" id="NF003828">
    <property type="entry name" value="PRK05416.1"/>
    <property type="match status" value="1"/>
</dbReference>
<dbReference type="PANTHER" id="PTHR30448">
    <property type="entry name" value="RNASE ADAPTER PROTEIN RAPZ"/>
    <property type="match status" value="1"/>
</dbReference>
<dbReference type="PANTHER" id="PTHR30448:SF0">
    <property type="entry name" value="RNASE ADAPTER PROTEIN RAPZ"/>
    <property type="match status" value="1"/>
</dbReference>
<dbReference type="Pfam" id="PF22740">
    <property type="entry name" value="PapZ_C"/>
    <property type="match status" value="1"/>
</dbReference>
<dbReference type="Pfam" id="PF03668">
    <property type="entry name" value="RapZ-like_N"/>
    <property type="match status" value="1"/>
</dbReference>
<dbReference type="PIRSF" id="PIRSF005052">
    <property type="entry name" value="P-loopkin"/>
    <property type="match status" value="1"/>
</dbReference>
<dbReference type="SUPFAM" id="SSF52540">
    <property type="entry name" value="P-loop containing nucleoside triphosphate hydrolases"/>
    <property type="match status" value="1"/>
</dbReference>
<name>Y619_ACIC5</name>
<accession>C1F1L8</accession>
<feature type="chain" id="PRO_1000147348" description="Nucleotide-binding protein ACP_0619">
    <location>
        <begin position="1"/>
        <end position="307"/>
    </location>
</feature>
<feature type="region of interest" description="Disordered" evidence="2">
    <location>
        <begin position="1"/>
        <end position="23"/>
    </location>
</feature>
<feature type="compositionally biased region" description="Basic and acidic residues" evidence="2">
    <location>
        <begin position="1"/>
        <end position="14"/>
    </location>
</feature>
<feature type="binding site" evidence="1">
    <location>
        <begin position="33"/>
        <end position="40"/>
    </location>
    <ligand>
        <name>ATP</name>
        <dbReference type="ChEBI" id="CHEBI:30616"/>
    </ligand>
</feature>
<feature type="binding site" evidence="1">
    <location>
        <begin position="83"/>
        <end position="86"/>
    </location>
    <ligand>
        <name>GTP</name>
        <dbReference type="ChEBI" id="CHEBI:37565"/>
    </ligand>
</feature>
<organism>
    <name type="scientific">Acidobacterium capsulatum (strain ATCC 51196 / DSM 11244 / BCRC 80197 / JCM 7670 / NBRC 15755 / NCIMB 13165 / 161)</name>
    <dbReference type="NCBI Taxonomy" id="240015"/>
    <lineage>
        <taxon>Bacteria</taxon>
        <taxon>Pseudomonadati</taxon>
        <taxon>Acidobacteriota</taxon>
        <taxon>Terriglobia</taxon>
        <taxon>Terriglobales</taxon>
        <taxon>Acidobacteriaceae</taxon>
        <taxon>Acidobacterium</taxon>
    </lineage>
</organism>
<proteinExistence type="inferred from homology"/>
<protein>
    <recommendedName>
        <fullName evidence="1">Nucleotide-binding protein ACP_0619</fullName>
    </recommendedName>
</protein>
<gene>
    <name type="ordered locus">ACP_0619</name>
</gene>